<dbReference type="EC" id="3.1.2.22" evidence="4"/>
<dbReference type="EMBL" id="AK220316">
    <property type="protein sequence ID" value="BAD90391.1"/>
    <property type="status" value="ALT_INIT"/>
    <property type="molecule type" value="Transcribed_RNA"/>
</dbReference>
<dbReference type="EMBL" id="BC005632">
    <property type="protein sequence ID" value="AAH05632.1"/>
    <property type="molecule type" value="mRNA"/>
</dbReference>
<dbReference type="EMBL" id="BC082997">
    <property type="protein sequence ID" value="AAH82997.1"/>
    <property type="molecule type" value="mRNA"/>
</dbReference>
<dbReference type="CCDS" id="CCDS24027.1">
    <molecule id="Q99JW1-1"/>
</dbReference>
<dbReference type="RefSeq" id="NP_663396.1">
    <molecule id="Q99JW1-1"/>
    <property type="nucleotide sequence ID" value="NM_145421.2"/>
</dbReference>
<dbReference type="RefSeq" id="XP_017169383.1">
    <molecule id="Q99JW1-1"/>
    <property type="nucleotide sequence ID" value="XM_017313894.3"/>
</dbReference>
<dbReference type="SMR" id="Q99JW1"/>
<dbReference type="BioGRID" id="229715">
    <property type="interactions" value="1"/>
</dbReference>
<dbReference type="FunCoup" id="Q99JW1">
    <property type="interactions" value="665"/>
</dbReference>
<dbReference type="STRING" id="10090.ENSMUSP00000003436"/>
<dbReference type="ESTHER" id="mouse-Q99JW1">
    <property type="family name" value="ABHD17-depalmitoylase"/>
</dbReference>
<dbReference type="MEROPS" id="S09.052"/>
<dbReference type="GlyGen" id="Q99JW1">
    <property type="glycosylation" value="1 site"/>
</dbReference>
<dbReference type="iPTMnet" id="Q99JW1"/>
<dbReference type="PhosphoSitePlus" id="Q99JW1"/>
<dbReference type="SwissPalm" id="Q99JW1"/>
<dbReference type="PaxDb" id="10090-ENSMUSP00000003436"/>
<dbReference type="ProteomicsDB" id="285702">
    <molecule id="Q99JW1-1"/>
</dbReference>
<dbReference type="ProteomicsDB" id="285703">
    <molecule id="Q99JW1-2"/>
</dbReference>
<dbReference type="Pumba" id="Q99JW1"/>
<dbReference type="Antibodypedia" id="53691">
    <property type="antibodies" value="46 antibodies from 14 providers"/>
</dbReference>
<dbReference type="DNASU" id="216169"/>
<dbReference type="Ensembl" id="ENSMUST00000003436.12">
    <molecule id="Q99JW1-1"/>
    <property type="protein sequence ID" value="ENSMUSP00000003436.6"/>
    <property type="gene ID" value="ENSMUSG00000003346.15"/>
</dbReference>
<dbReference type="GeneID" id="216169"/>
<dbReference type="KEGG" id="mmu:216169"/>
<dbReference type="UCSC" id="uc007gdv.2">
    <molecule id="Q99JW1-1"/>
    <property type="organism name" value="mouse"/>
</dbReference>
<dbReference type="AGR" id="MGI:106388"/>
<dbReference type="CTD" id="81926"/>
<dbReference type="MGI" id="MGI:106388">
    <property type="gene designation" value="Abhd17a"/>
</dbReference>
<dbReference type="VEuPathDB" id="HostDB:ENSMUSG00000003346"/>
<dbReference type="eggNOG" id="KOG1552">
    <property type="taxonomic scope" value="Eukaryota"/>
</dbReference>
<dbReference type="GeneTree" id="ENSGT00940000155854"/>
<dbReference type="HOGENOM" id="CLU_029375_5_4_1"/>
<dbReference type="InParanoid" id="Q99JW1"/>
<dbReference type="OMA" id="YIRCVPG"/>
<dbReference type="OrthoDB" id="446723at2759"/>
<dbReference type="PhylomeDB" id="Q99JW1"/>
<dbReference type="TreeFam" id="TF314365"/>
<dbReference type="Reactome" id="R-MMU-9648002">
    <property type="pathway name" value="RAS processing"/>
</dbReference>
<dbReference type="BioGRID-ORCS" id="216169">
    <property type="hits" value="2 hits in 76 CRISPR screens"/>
</dbReference>
<dbReference type="ChiTaRS" id="Abhd17a">
    <property type="organism name" value="mouse"/>
</dbReference>
<dbReference type="PRO" id="PR:Q99JW1"/>
<dbReference type="Proteomes" id="UP000000589">
    <property type="component" value="Chromosome 10"/>
</dbReference>
<dbReference type="RNAct" id="Q99JW1">
    <property type="molecule type" value="protein"/>
</dbReference>
<dbReference type="Bgee" id="ENSMUSG00000003346">
    <property type="expression patterns" value="Expressed in external carotid artery and 250 other cell types or tissues"/>
</dbReference>
<dbReference type="ExpressionAtlas" id="Q99JW1">
    <property type="expression patterns" value="baseline and differential"/>
</dbReference>
<dbReference type="GO" id="GO:0043197">
    <property type="term" value="C:dendritic spine"/>
    <property type="evidence" value="ECO:0007669"/>
    <property type="project" value="UniProtKB-SubCell"/>
</dbReference>
<dbReference type="GO" id="GO:0098978">
    <property type="term" value="C:glutamatergic synapse"/>
    <property type="evidence" value="ECO:0007669"/>
    <property type="project" value="Ensembl"/>
</dbReference>
<dbReference type="GO" id="GO:0016607">
    <property type="term" value="C:nuclear speck"/>
    <property type="evidence" value="ECO:0007669"/>
    <property type="project" value="Ensembl"/>
</dbReference>
<dbReference type="GO" id="GO:0098839">
    <property type="term" value="C:postsynaptic density membrane"/>
    <property type="evidence" value="ECO:0007669"/>
    <property type="project" value="UniProtKB-SubCell"/>
</dbReference>
<dbReference type="GO" id="GO:0098944">
    <property type="term" value="C:postsynaptic recycling endosome membrane"/>
    <property type="evidence" value="ECO:0007669"/>
    <property type="project" value="Ensembl"/>
</dbReference>
<dbReference type="GO" id="GO:0055038">
    <property type="term" value="C:recycling endosome membrane"/>
    <property type="evidence" value="ECO:0007669"/>
    <property type="project" value="Ensembl"/>
</dbReference>
<dbReference type="GO" id="GO:0008474">
    <property type="term" value="F:palmitoyl-(protein) hydrolase activity"/>
    <property type="evidence" value="ECO:0007669"/>
    <property type="project" value="UniProtKB-EC"/>
</dbReference>
<dbReference type="GO" id="GO:1900226">
    <property type="term" value="P:negative regulation of NLRP3 inflammasome complex assembly"/>
    <property type="evidence" value="ECO:0007669"/>
    <property type="project" value="Ensembl"/>
</dbReference>
<dbReference type="GO" id="GO:1902817">
    <property type="term" value="P:negative regulation of protein localization to microtubule"/>
    <property type="evidence" value="ECO:0007669"/>
    <property type="project" value="Ensembl"/>
</dbReference>
<dbReference type="GO" id="GO:1905668">
    <property type="term" value="P:positive regulation of protein localization to endosome"/>
    <property type="evidence" value="ECO:0007669"/>
    <property type="project" value="Ensembl"/>
</dbReference>
<dbReference type="GO" id="GO:0072657">
    <property type="term" value="P:protein localization to membrane"/>
    <property type="evidence" value="ECO:0007669"/>
    <property type="project" value="Ensembl"/>
</dbReference>
<dbReference type="GO" id="GO:0099175">
    <property type="term" value="P:regulation of postsynapse organization"/>
    <property type="evidence" value="ECO:0007669"/>
    <property type="project" value="Ensembl"/>
</dbReference>
<dbReference type="FunFam" id="3.40.50.1820:FF:000008">
    <property type="entry name" value="Alpha/beta hydrolase domain-containing protein 17B"/>
    <property type="match status" value="1"/>
</dbReference>
<dbReference type="Gene3D" id="3.40.50.1820">
    <property type="entry name" value="alpha/beta hydrolase"/>
    <property type="match status" value="1"/>
</dbReference>
<dbReference type="InterPro" id="IPR029058">
    <property type="entry name" value="AB_hydrolase_fold"/>
</dbReference>
<dbReference type="InterPro" id="IPR022742">
    <property type="entry name" value="Hydrolase_4"/>
</dbReference>
<dbReference type="PANTHER" id="PTHR12277">
    <property type="entry name" value="ALPHA/BETA HYDROLASE DOMAIN-CONTAINING PROTEIN"/>
    <property type="match status" value="1"/>
</dbReference>
<dbReference type="PANTHER" id="PTHR12277:SF52">
    <property type="entry name" value="ALPHA_BETA HYDROLASE DOMAIN-CONTAINING PROTEIN 17A"/>
    <property type="match status" value="1"/>
</dbReference>
<dbReference type="Pfam" id="PF12146">
    <property type="entry name" value="Hydrolase_4"/>
    <property type="match status" value="1"/>
</dbReference>
<dbReference type="SUPFAM" id="SSF53474">
    <property type="entry name" value="alpha/beta-Hydrolases"/>
    <property type="match status" value="1"/>
</dbReference>
<name>AB17A_MOUSE</name>
<proteinExistence type="evidence at protein level"/>
<reference key="1">
    <citation type="submission" date="2005-02" db="EMBL/GenBank/DDBJ databases">
        <title>Prediction of the coding sequences of mouse homologues of KIAA gene. The complete nucleotide sequences of mouse KIAA-homologous cDNAs identified by screening of terminal sequences of cDNA clones randomly sampled from size-fractionated libraries.</title>
        <authorList>
            <person name="Okazaki N."/>
            <person name="Kikuno R.F."/>
            <person name="Ohara R."/>
            <person name="Inamoto S."/>
            <person name="Nagase T."/>
            <person name="Ohara O."/>
            <person name="Koga H."/>
        </authorList>
    </citation>
    <scope>NUCLEOTIDE SEQUENCE [LARGE SCALE MRNA] (ISOFORM 2)</scope>
    <source>
        <tissue>Brain</tissue>
    </source>
</reference>
<reference key="2">
    <citation type="journal article" date="2004" name="Genome Res.">
        <title>The status, quality, and expansion of the NIH full-length cDNA project: the Mammalian Gene Collection (MGC).</title>
        <authorList>
            <consortium name="The MGC Project Team"/>
        </authorList>
    </citation>
    <scope>NUCLEOTIDE SEQUENCE [LARGE SCALE MRNA] (ISOFORM 1)</scope>
    <source>
        <strain>FVB/N</strain>
        <tissue>Mammary tumor</tissue>
    </source>
</reference>
<reference key="3">
    <citation type="journal article" date="2010" name="Cell">
        <title>A tissue-specific atlas of mouse protein phosphorylation and expression.</title>
        <authorList>
            <person name="Huttlin E.L."/>
            <person name="Jedrychowski M.P."/>
            <person name="Elias J.E."/>
            <person name="Goswami T."/>
            <person name="Rad R."/>
            <person name="Beausoleil S.A."/>
            <person name="Villen J."/>
            <person name="Haas W."/>
            <person name="Sowa M.E."/>
            <person name="Gygi S.P."/>
        </authorList>
    </citation>
    <scope>IDENTIFICATION BY MASS SPECTROMETRY [LARGE SCALE ANALYSIS]</scope>
    <source>
        <tissue>Testis</tissue>
    </source>
</reference>
<evidence type="ECO:0000250" key="1">
    <source>
        <dbReference type="UniProtKB" id="O75608"/>
    </source>
</evidence>
<evidence type="ECO:0000250" key="2">
    <source>
        <dbReference type="UniProtKB" id="Q5XIJ5"/>
    </source>
</evidence>
<evidence type="ECO:0000250" key="3">
    <source>
        <dbReference type="UniProtKB" id="Q7M759"/>
    </source>
</evidence>
<evidence type="ECO:0000250" key="4">
    <source>
        <dbReference type="UniProtKB" id="Q96GS6"/>
    </source>
</evidence>
<evidence type="ECO:0000256" key="5">
    <source>
        <dbReference type="SAM" id="MobiDB-lite"/>
    </source>
</evidence>
<evidence type="ECO:0000303" key="6">
    <source ref="1"/>
</evidence>
<evidence type="ECO:0000305" key="7"/>
<evidence type="ECO:0000312" key="8">
    <source>
        <dbReference type="MGI" id="MGI:106388"/>
    </source>
</evidence>
<feature type="chain" id="PRO_0000297510" description="Alpha/beta hydrolase domain-containing protein 17A">
    <location>
        <begin position="1"/>
        <end position="310"/>
    </location>
</feature>
<feature type="region of interest" description="Disordered" evidence="5">
    <location>
        <begin position="38"/>
        <end position="61"/>
    </location>
</feature>
<feature type="active site" description="Charge relay system" evidence="4">
    <location>
        <position position="190"/>
    </location>
</feature>
<feature type="active site" description="Charge relay system" evidence="1">
    <location>
        <position position="255"/>
    </location>
</feature>
<feature type="active site" description="Charge relay system" evidence="1">
    <location>
        <position position="284"/>
    </location>
</feature>
<feature type="modified residue" description="Phosphoserine" evidence="4">
    <location>
        <position position="307"/>
    </location>
</feature>
<feature type="splice variant" id="VSP_027272" description="In isoform 2." evidence="6">
    <location>
        <begin position="112"/>
        <end position="175"/>
    </location>
</feature>
<accession>Q99JW1</accession>
<accession>Q5DU54</accession>
<sequence length="310" mass="33950">MNGLSVSELCCLFCCPPCPGRIAAKLAFLPPDPTYSLVPEPEPGPGGAGAAPSGPLRTSAATPGRWKIHLTERADFQYGQRELDTIEVFVTKSARANRIACMYVRCVPGARYTVLFSHGNAVDLGQMCSFYVGLGTRIGCNIFSYDYSGYGISSGRPSEKNLYADIDAAWQALRTRYGISPDSIILYGQSIGTVPTVDLASRYECAAVVLHSPLTSGMRVAFPDTKKTYCFDAFPNIEKVSKITSPVLIIHGTEDEVIDFSHGLALYERCPKAVEPLWVEGAGHNDIELYSQYLERLRRFISQELPSQRA</sequence>
<keyword id="KW-0025">Alternative splicing</keyword>
<keyword id="KW-1003">Cell membrane</keyword>
<keyword id="KW-0966">Cell projection</keyword>
<keyword id="KW-0967">Endosome</keyword>
<keyword id="KW-0378">Hydrolase</keyword>
<keyword id="KW-0449">Lipoprotein</keyword>
<keyword id="KW-0472">Membrane</keyword>
<keyword id="KW-0564">Palmitate</keyword>
<keyword id="KW-0597">Phosphoprotein</keyword>
<keyword id="KW-0628">Postsynaptic cell membrane</keyword>
<keyword id="KW-1185">Reference proteome</keyword>
<keyword id="KW-0770">Synapse</keyword>
<organism>
    <name type="scientific">Mus musculus</name>
    <name type="common">Mouse</name>
    <dbReference type="NCBI Taxonomy" id="10090"/>
    <lineage>
        <taxon>Eukaryota</taxon>
        <taxon>Metazoa</taxon>
        <taxon>Chordata</taxon>
        <taxon>Craniata</taxon>
        <taxon>Vertebrata</taxon>
        <taxon>Euteleostomi</taxon>
        <taxon>Mammalia</taxon>
        <taxon>Eutheria</taxon>
        <taxon>Euarchontoglires</taxon>
        <taxon>Glires</taxon>
        <taxon>Rodentia</taxon>
        <taxon>Myomorpha</taxon>
        <taxon>Muroidea</taxon>
        <taxon>Muridae</taxon>
        <taxon>Murinae</taxon>
        <taxon>Mus</taxon>
        <taxon>Mus</taxon>
    </lineage>
</organism>
<comment type="function">
    <text evidence="2 4">Hydrolyzes fatty acids from S-acylated cysteine residues in proteins. Has depalmitoylating activity towards NRAS. Has depalmitoylating activity towards DLG4/PSD95. May have depalmitoylating activity towars MAP6.</text>
</comment>
<comment type="catalytic activity">
    <reaction evidence="4">
        <text>S-hexadecanoyl-L-cysteinyl-[protein] + H2O = L-cysteinyl-[protein] + hexadecanoate + H(+)</text>
        <dbReference type="Rhea" id="RHEA:19233"/>
        <dbReference type="Rhea" id="RHEA-COMP:10131"/>
        <dbReference type="Rhea" id="RHEA-COMP:11032"/>
        <dbReference type="ChEBI" id="CHEBI:7896"/>
        <dbReference type="ChEBI" id="CHEBI:15377"/>
        <dbReference type="ChEBI" id="CHEBI:15378"/>
        <dbReference type="ChEBI" id="CHEBI:29950"/>
        <dbReference type="ChEBI" id="CHEBI:74151"/>
        <dbReference type="EC" id="3.1.2.22"/>
    </reaction>
</comment>
<comment type="subcellular location">
    <subcellularLocation>
        <location evidence="4">Cell membrane</location>
        <topology evidence="4">Lipid-anchor</topology>
        <orientation evidence="4">Cytoplasmic side</orientation>
    </subcellularLocation>
    <subcellularLocation>
        <location evidence="4">Endosome membrane</location>
        <topology evidence="4">Lipid-anchor</topology>
        <orientation evidence="4">Cytoplasmic side</orientation>
    </subcellularLocation>
    <subcellularLocation>
        <location evidence="2">Cell projection</location>
        <location evidence="2">Dendritic spine</location>
    </subcellularLocation>
    <subcellularLocation>
        <location evidence="2">Postsynaptic density membrane</location>
    </subcellularLocation>
</comment>
<comment type="alternative products">
    <event type="alternative splicing"/>
    <isoform>
        <id>Q99JW1-1</id>
        <name>1</name>
        <sequence type="displayed"/>
    </isoform>
    <isoform>
        <id>Q99JW1-2</id>
        <name>2</name>
        <sequence type="described" ref="VSP_027272"/>
    </isoform>
</comment>
<comment type="PTM">
    <text evidence="3">Palmitoylated on cysteine residues located in a cysteine cluster at the N-terminus which promotes membrane localization. Palmitoylation is required for post-synaptic localization and for depalmitoylating activity towards DLG4/PSD95.</text>
</comment>
<comment type="similarity">
    <text evidence="7">Belongs to the AB hydrolase superfamily. ABHD17 family.</text>
</comment>
<comment type="sequence caution" evidence="7">
    <conflict type="erroneous initiation">
        <sequence resource="EMBL-CDS" id="BAD90391"/>
    </conflict>
</comment>
<protein>
    <recommendedName>
        <fullName evidence="7">Alpha/beta hydrolase domain-containing protein 17A</fullName>
        <shortName evidence="8">Abhydrolase domain-containing protein 17A</shortName>
        <ecNumber evidence="4">3.1.2.22</ecNumber>
    </recommendedName>
</protein>
<gene>
    <name evidence="8" type="primary">Abhd17a</name>
    <name type="synonym">D10Bwg1364e</name>
</gene>